<name>ATF4_DANRE</name>
<protein>
    <recommendedName>
        <fullName>Cyclic AMP-dependent transcription factor ATF-4</fullName>
        <shortName>cAMP-dependent transcription factor ATF-4</shortName>
    </recommendedName>
    <alternativeName>
        <fullName>Activating transcription factor 4</fullName>
    </alternativeName>
</protein>
<comment type="function">
    <text evidence="1 2">Transcription factor that binds the cAMP response element (CRE) (consensus: 5'-GTGACGT[AC][AG]-3') and displays two biological functions, as regulator of metabolic and redox processes under normal cellular conditions, and as master transcription factor during integrated stress response (ISR) (By similarity). Binds to asymmetric CRE's as a heterodimer and to palindromic CRE's as a homodimer (By similarity). Core effector of the ISR, which is required for adaptation to various stress such as endoplasmic reticulum (ER) stress, amino acid starvation, mitochondrial stress or oxidative stress. During ISR, atf4 translation is induced via an alternative ribosome translation re-initiation mechanism in response to eif2s1/eIF-2-alpha phosphorylation, and stress-induced atf4 acts as a master transcription factor of stress-responsive genes in order to promote cell recovery (By similarity). Promotes the transcription of genes linked to amino acid sufficiency and resistance to oxidative stress to protect cells against metabolic consequences of ER oxidation (By similarity). In the absence of stress, atf4 translation is at low levels and it is required for normal metabolic processes such as embryonic lens formation, fetal liver hematopoiesis, bone development and synaptic plasticity (By similarity). Acts as a regulator of osteoblast differentiation by promoting expression of osteoblast-specific genes (By similarity). Regulates the circadian expression of the core clock components. Mainly acts as a transcriptional activator in cellular stress adaptation, but it can also act as a transcriptional repressor (By similarity).</text>
</comment>
<comment type="subunit">
    <text evidence="1">Binds DNA as a homodimer and as a heterodimer.</text>
</comment>
<comment type="subcellular location">
    <subcellularLocation>
        <location evidence="1">Nucleus</location>
    </subcellularLocation>
</comment>
<comment type="similarity">
    <text evidence="5">Belongs to the bZIP family.</text>
</comment>
<reference evidence="6" key="1">
    <citation type="submission" date="2004-03" db="EMBL/GenBank/DDBJ databases">
        <authorList>
            <consortium name="NIH - Zebrafish Gene Collection (ZGC) project"/>
        </authorList>
    </citation>
    <scope>NUCLEOTIDE SEQUENCE [LARGE SCALE MRNA]</scope>
    <source>
        <tissue evidence="6">Embryo</tissue>
    </source>
</reference>
<organism>
    <name type="scientific">Danio rerio</name>
    <name type="common">Zebrafish</name>
    <name type="synonym">Brachydanio rerio</name>
    <dbReference type="NCBI Taxonomy" id="7955"/>
    <lineage>
        <taxon>Eukaryota</taxon>
        <taxon>Metazoa</taxon>
        <taxon>Chordata</taxon>
        <taxon>Craniata</taxon>
        <taxon>Vertebrata</taxon>
        <taxon>Euteleostomi</taxon>
        <taxon>Actinopterygii</taxon>
        <taxon>Neopterygii</taxon>
        <taxon>Teleostei</taxon>
        <taxon>Ostariophysi</taxon>
        <taxon>Cypriniformes</taxon>
        <taxon>Danionidae</taxon>
        <taxon>Danioninae</taxon>
        <taxon>Danio</taxon>
    </lineage>
</organism>
<sequence length="339" mass="36605">MSLCVGDAGALLLGPWPLTADPQGPLLDQDEESSVLEGSWSPSSSSLSSFSPPASGDAPSELLSLSWQPSDVLLTEQSTAGDVFPGMDWMTEKLDLNDFDLDSLIGSCDSEDSPGSPEDLLACLDSSMDLDLDSLPFGSADLDLPLGLDLPLPEEIKSEPLSPAPSVPSPPEEAPQDEHTEVPVLHPAGIMLSLSPSHIVVLLTPKEEQNISDCSDSDSGISVSGSPAHQSDLEPSSRAKPYSRPDPEASPALKGRVKTSSGAPKVEKKLKKMEQNKTAATRYRQKKRVEQESLNSECSELEKKNRELSEKADSLSREIQYLRDLLEEMRTAKQRKSKR</sequence>
<evidence type="ECO:0000250" key="1">
    <source>
        <dbReference type="UniProtKB" id="P18848"/>
    </source>
</evidence>
<evidence type="ECO:0000250" key="2">
    <source>
        <dbReference type="UniProtKB" id="Q06507"/>
    </source>
</evidence>
<evidence type="ECO:0000255" key="3">
    <source>
        <dbReference type="PROSITE-ProRule" id="PRU00978"/>
    </source>
</evidence>
<evidence type="ECO:0000256" key="4">
    <source>
        <dbReference type="SAM" id="MobiDB-lite"/>
    </source>
</evidence>
<evidence type="ECO:0000305" key="5"/>
<evidence type="ECO:0000312" key="6">
    <source>
        <dbReference type="EMBL" id="AAH67714.1"/>
    </source>
</evidence>
<evidence type="ECO:0000312" key="7">
    <source>
        <dbReference type="ZFIN" id="ZDB-GENE-040426-2340"/>
    </source>
</evidence>
<gene>
    <name type="primary">atf4</name>
    <name evidence="7" type="synonym">atf4a</name>
    <name type="ORF">zgc:85951</name>
</gene>
<accession>Q6NW59</accession>
<dbReference type="EMBL" id="BC067714">
    <property type="protein sequence ID" value="AAH67714.1"/>
    <property type="molecule type" value="mRNA"/>
</dbReference>
<dbReference type="RefSeq" id="NP_998398.1">
    <property type="nucleotide sequence ID" value="NM_213233.1"/>
</dbReference>
<dbReference type="SMR" id="Q6NW59"/>
<dbReference type="FunCoup" id="Q6NW59">
    <property type="interactions" value="1066"/>
</dbReference>
<dbReference type="STRING" id="7955.ENSDARP00000145766"/>
<dbReference type="PaxDb" id="7955-ENSDARP00000042969"/>
<dbReference type="Ensembl" id="ENSDART00000191678">
    <property type="protein sequence ID" value="ENSDARP00000145766"/>
    <property type="gene ID" value="ENSDARG00000111939"/>
</dbReference>
<dbReference type="GeneID" id="406514"/>
<dbReference type="KEGG" id="dre:406514"/>
<dbReference type="AGR" id="ZFIN:ZDB-GENE-040426-2340"/>
<dbReference type="CTD" id="406514"/>
<dbReference type="ZFIN" id="ZDB-GENE-040426-2340">
    <property type="gene designation" value="atf4a"/>
</dbReference>
<dbReference type="eggNOG" id="KOG4571">
    <property type="taxonomic scope" value="Eukaryota"/>
</dbReference>
<dbReference type="HOGENOM" id="CLU_055748_0_0_1"/>
<dbReference type="InParanoid" id="Q6NW59"/>
<dbReference type="OMA" id="ATIQEFH"/>
<dbReference type="OrthoDB" id="5847285at2759"/>
<dbReference type="PhylomeDB" id="Q6NW59"/>
<dbReference type="TreeFam" id="TF316136"/>
<dbReference type="PRO" id="PR:Q6NW59"/>
<dbReference type="Proteomes" id="UP000000437">
    <property type="component" value="Chromosome 6"/>
</dbReference>
<dbReference type="Bgee" id="ENSDARG00000111939">
    <property type="expression patterns" value="Expressed in granulocyte and 27 other cell types or tissues"/>
</dbReference>
<dbReference type="GO" id="GO:1990590">
    <property type="term" value="C:ATF1-ATF4 transcription factor complex"/>
    <property type="evidence" value="ECO:0000318"/>
    <property type="project" value="GO_Central"/>
</dbReference>
<dbReference type="GO" id="GO:1990589">
    <property type="term" value="C:ATF4-CREB1 transcription factor complex"/>
    <property type="evidence" value="ECO:0000318"/>
    <property type="project" value="GO_Central"/>
</dbReference>
<dbReference type="GO" id="GO:0005634">
    <property type="term" value="C:nucleus"/>
    <property type="evidence" value="ECO:0000250"/>
    <property type="project" value="UniProtKB"/>
</dbReference>
<dbReference type="GO" id="GO:0008140">
    <property type="term" value="F:cAMP response element binding protein binding"/>
    <property type="evidence" value="ECO:0000250"/>
    <property type="project" value="UniProtKB"/>
</dbReference>
<dbReference type="GO" id="GO:0001228">
    <property type="term" value="F:DNA-binding transcription activator activity, RNA polymerase II-specific"/>
    <property type="evidence" value="ECO:0000318"/>
    <property type="project" value="GO_Central"/>
</dbReference>
<dbReference type="GO" id="GO:0003700">
    <property type="term" value="F:DNA-binding transcription factor activity"/>
    <property type="evidence" value="ECO:0000250"/>
    <property type="project" value="UniProtKB"/>
</dbReference>
<dbReference type="GO" id="GO:0046982">
    <property type="term" value="F:protein heterodimerization activity"/>
    <property type="evidence" value="ECO:0000250"/>
    <property type="project" value="UniProtKB"/>
</dbReference>
<dbReference type="GO" id="GO:0000977">
    <property type="term" value="F:RNA polymerase II transcription regulatory region sequence-specific DNA binding"/>
    <property type="evidence" value="ECO:0000318"/>
    <property type="project" value="GO_Central"/>
</dbReference>
<dbReference type="GO" id="GO:0030282">
    <property type="term" value="P:bone mineralization"/>
    <property type="evidence" value="ECO:0000250"/>
    <property type="project" value="UniProtKB"/>
</dbReference>
<dbReference type="GO" id="GO:0034198">
    <property type="term" value="P:cellular response to amino acid starvation"/>
    <property type="evidence" value="ECO:0000250"/>
    <property type="project" value="UniProtKB"/>
</dbReference>
<dbReference type="GO" id="GO:0034599">
    <property type="term" value="P:cellular response to oxidative stress"/>
    <property type="evidence" value="ECO:0000250"/>
    <property type="project" value="UniProtKB"/>
</dbReference>
<dbReference type="GO" id="GO:0035162">
    <property type="term" value="P:embryonic hemopoiesis"/>
    <property type="evidence" value="ECO:0000250"/>
    <property type="project" value="UniProtKB"/>
</dbReference>
<dbReference type="GO" id="GO:0030968">
    <property type="term" value="P:endoplasmic reticulum unfolded protein response"/>
    <property type="evidence" value="ECO:0000250"/>
    <property type="project" value="UniProtKB"/>
</dbReference>
<dbReference type="GO" id="GO:0140468">
    <property type="term" value="P:HRI-mediated signaling"/>
    <property type="evidence" value="ECO:0000250"/>
    <property type="project" value="UniProtKB"/>
</dbReference>
<dbReference type="GO" id="GO:0140467">
    <property type="term" value="P:integrated stress response signaling"/>
    <property type="evidence" value="ECO:0000250"/>
    <property type="project" value="UniProtKB"/>
</dbReference>
<dbReference type="GO" id="GO:0070059">
    <property type="term" value="P:intrinsic apoptotic signaling pathway in response to endoplasmic reticulum stress"/>
    <property type="evidence" value="ECO:0000250"/>
    <property type="project" value="UniProtKB"/>
</dbReference>
<dbReference type="GO" id="GO:0070309">
    <property type="term" value="P:lens fiber cell morphogenesis"/>
    <property type="evidence" value="ECO:0000250"/>
    <property type="project" value="UniProtKB"/>
</dbReference>
<dbReference type="GO" id="GO:0000122">
    <property type="term" value="P:negative regulation of transcription by RNA polymerase II"/>
    <property type="evidence" value="ECO:0000250"/>
    <property type="project" value="UniProtKB"/>
</dbReference>
<dbReference type="GO" id="GO:0036499">
    <property type="term" value="P:PERK-mediated unfolded protein response"/>
    <property type="evidence" value="ECO:0000250"/>
    <property type="project" value="UniProtKB"/>
</dbReference>
<dbReference type="GO" id="GO:0045944">
    <property type="term" value="P:positive regulation of transcription by RNA polymerase II"/>
    <property type="evidence" value="ECO:0000250"/>
    <property type="project" value="UniProtKB"/>
</dbReference>
<dbReference type="GO" id="GO:0042981">
    <property type="term" value="P:regulation of apoptotic process"/>
    <property type="evidence" value="ECO:0007669"/>
    <property type="project" value="UniProtKB-ARBA"/>
</dbReference>
<dbReference type="GO" id="GO:0045667">
    <property type="term" value="P:regulation of osteoblast differentiation"/>
    <property type="evidence" value="ECO:0000250"/>
    <property type="project" value="UniProtKB"/>
</dbReference>
<dbReference type="GO" id="GO:0048167">
    <property type="term" value="P:regulation of synaptic plasticity"/>
    <property type="evidence" value="ECO:0000250"/>
    <property type="project" value="UniProtKB"/>
</dbReference>
<dbReference type="GO" id="GO:0006357">
    <property type="term" value="P:regulation of transcription by RNA polymerase II"/>
    <property type="evidence" value="ECO:0000318"/>
    <property type="project" value="GO_Central"/>
</dbReference>
<dbReference type="GO" id="GO:0034976">
    <property type="term" value="P:response to endoplasmic reticulum stress"/>
    <property type="evidence" value="ECO:0000250"/>
    <property type="project" value="UniProtKB"/>
</dbReference>
<dbReference type="GO" id="GO:0048511">
    <property type="term" value="P:rhythmic process"/>
    <property type="evidence" value="ECO:0007669"/>
    <property type="project" value="UniProtKB-KW"/>
</dbReference>
<dbReference type="CDD" id="cd14692">
    <property type="entry name" value="bZIP_ATF4"/>
    <property type="match status" value="1"/>
</dbReference>
<dbReference type="FunFam" id="1.20.5.170:FF:000021">
    <property type="entry name" value="Cyclic AMP-dependent transcription factor ATF-4"/>
    <property type="match status" value="1"/>
</dbReference>
<dbReference type="Gene3D" id="1.20.5.170">
    <property type="match status" value="1"/>
</dbReference>
<dbReference type="InterPro" id="IPR004827">
    <property type="entry name" value="bZIP"/>
</dbReference>
<dbReference type="InterPro" id="IPR046347">
    <property type="entry name" value="bZIP_sf"/>
</dbReference>
<dbReference type="PANTHER" id="PTHR13044">
    <property type="entry name" value="ACTIVATING TRANSCRIPTION FACTOR ATF 4/5"/>
    <property type="match status" value="1"/>
</dbReference>
<dbReference type="PANTHER" id="PTHR13044:SF2">
    <property type="entry name" value="CYCLIC AMP-DEPENDENT TRANSCRIPTION FACTOR ATF-4"/>
    <property type="match status" value="1"/>
</dbReference>
<dbReference type="Pfam" id="PF00170">
    <property type="entry name" value="bZIP_1"/>
    <property type="match status" value="1"/>
</dbReference>
<dbReference type="SMART" id="SM00338">
    <property type="entry name" value="BRLZ"/>
    <property type="match status" value="1"/>
</dbReference>
<dbReference type="SUPFAM" id="SSF57959">
    <property type="entry name" value="Leucine zipper domain"/>
    <property type="match status" value="1"/>
</dbReference>
<dbReference type="PROSITE" id="PS50217">
    <property type="entry name" value="BZIP"/>
    <property type="match status" value="1"/>
</dbReference>
<dbReference type="PROSITE" id="PS00036">
    <property type="entry name" value="BZIP_BASIC"/>
    <property type="match status" value="1"/>
</dbReference>
<keyword id="KW-0010">Activator</keyword>
<keyword id="KW-0090">Biological rhythms</keyword>
<keyword id="KW-0238">DNA-binding</keyword>
<keyword id="KW-0539">Nucleus</keyword>
<keyword id="KW-1185">Reference proteome</keyword>
<keyword id="KW-0678">Repressor</keyword>
<keyword id="KW-0804">Transcription</keyword>
<keyword id="KW-0805">Transcription regulation</keyword>
<proteinExistence type="evidence at transcript level"/>
<feature type="chain" id="PRO_0000258023" description="Cyclic AMP-dependent transcription factor ATF-4">
    <location>
        <begin position="1"/>
        <end position="339"/>
    </location>
</feature>
<feature type="domain" description="bZIP" evidence="3">
    <location>
        <begin position="266"/>
        <end position="329"/>
    </location>
</feature>
<feature type="region of interest" description="Disordered" evidence="4">
    <location>
        <begin position="14"/>
        <end position="62"/>
    </location>
</feature>
<feature type="region of interest" description="Disordered" evidence="4">
    <location>
        <begin position="153"/>
        <end position="182"/>
    </location>
</feature>
<feature type="region of interest" description="Disordered" evidence="4">
    <location>
        <begin position="209"/>
        <end position="313"/>
    </location>
</feature>
<feature type="region of interest" description="Basic motif" evidence="3">
    <location>
        <begin position="268"/>
        <end position="288"/>
    </location>
</feature>
<feature type="region of interest" description="Leucine-zipper" evidence="3">
    <location>
        <begin position="294"/>
        <end position="322"/>
    </location>
</feature>
<feature type="compositionally biased region" description="Low complexity" evidence="4">
    <location>
        <begin position="35"/>
        <end position="55"/>
    </location>
</feature>
<feature type="compositionally biased region" description="Pro residues" evidence="4">
    <location>
        <begin position="162"/>
        <end position="173"/>
    </location>
</feature>
<feature type="compositionally biased region" description="Low complexity" evidence="4">
    <location>
        <begin position="211"/>
        <end position="226"/>
    </location>
</feature>
<feature type="compositionally biased region" description="Basic and acidic residues" evidence="4">
    <location>
        <begin position="231"/>
        <end position="247"/>
    </location>
</feature>
<feature type="compositionally biased region" description="Basic and acidic residues" evidence="4">
    <location>
        <begin position="300"/>
        <end position="313"/>
    </location>
</feature>